<name>TBPB2_NEIMI</name>
<protein>
    <recommendedName>
        <fullName evidence="11">Transferrin-binding protein B</fullName>
        <shortName evidence="11">TbpB</shortName>
    </recommendedName>
    <alternativeName>
        <fullName evidence="9">Surface lipoprotein TbpB</fullName>
    </alternativeName>
    <alternativeName>
        <fullName evidence="10">Transferrin-binding protein 2</fullName>
        <shortName>TBP-2</shortName>
    </alternativeName>
</protein>
<feature type="signal peptide" evidence="7">
    <location>
        <begin position="1"/>
        <end position="20"/>
    </location>
</feature>
<feature type="chain" id="PRO_0000018195" description="Transferrin-binding protein B">
    <location>
        <begin position="21"/>
        <end position="599"/>
    </location>
</feature>
<feature type="region of interest" description="Disordered" evidence="3">
    <location>
        <begin position="39"/>
        <end position="61"/>
    </location>
</feature>
<feature type="region of interest" description="Disordered" evidence="3">
    <location>
        <begin position="80"/>
        <end position="119"/>
    </location>
</feature>
<feature type="compositionally biased region" description="Basic and acidic residues" evidence="3">
    <location>
        <begin position="39"/>
        <end position="51"/>
    </location>
</feature>
<feature type="compositionally biased region" description="Polar residues" evidence="3">
    <location>
        <begin position="52"/>
        <end position="61"/>
    </location>
</feature>
<feature type="compositionally biased region" description="Basic and acidic residues" evidence="3">
    <location>
        <begin position="107"/>
        <end position="119"/>
    </location>
</feature>
<feature type="lipid moiety-binding region" description="N-palmitoyl cysteine" evidence="11">
    <location>
        <position position="21"/>
    </location>
</feature>
<feature type="lipid moiety-binding region" description="S-diacylglycerol cysteine" evidence="11">
    <location>
        <position position="21"/>
    </location>
</feature>
<feature type="strand" evidence="16">
    <location>
        <begin position="66"/>
        <end position="71"/>
    </location>
</feature>
<feature type="strand" evidence="16">
    <location>
        <begin position="80"/>
        <end position="82"/>
    </location>
</feature>
<feature type="strand" evidence="16">
    <location>
        <begin position="86"/>
        <end position="88"/>
    </location>
</feature>
<feature type="helix" evidence="16">
    <location>
        <begin position="92"/>
        <end position="94"/>
    </location>
</feature>
<feature type="strand" evidence="16">
    <location>
        <begin position="95"/>
        <end position="98"/>
    </location>
</feature>
<feature type="helix" evidence="16">
    <location>
        <begin position="107"/>
        <end position="116"/>
    </location>
</feature>
<feature type="strand" evidence="16">
    <location>
        <begin position="128"/>
        <end position="131"/>
    </location>
</feature>
<feature type="strand" evidence="16">
    <location>
        <begin position="140"/>
        <end position="149"/>
    </location>
</feature>
<feature type="strand" evidence="16">
    <location>
        <begin position="153"/>
        <end position="155"/>
    </location>
</feature>
<feature type="turn" evidence="16">
    <location>
        <begin position="156"/>
        <end position="159"/>
    </location>
</feature>
<feature type="strand" evidence="16">
    <location>
        <begin position="160"/>
        <end position="162"/>
    </location>
</feature>
<feature type="strand" evidence="16">
    <location>
        <begin position="166"/>
        <end position="176"/>
    </location>
</feature>
<feature type="strand" evidence="16">
    <location>
        <begin position="178"/>
        <end position="195"/>
    </location>
</feature>
<feature type="turn" evidence="16">
    <location>
        <begin position="204"/>
        <end position="206"/>
    </location>
</feature>
<feature type="helix" evidence="16">
    <location>
        <begin position="208"/>
        <end position="210"/>
    </location>
</feature>
<feature type="strand" evidence="16">
    <location>
        <begin position="212"/>
        <end position="215"/>
    </location>
</feature>
<feature type="helix" evidence="16">
    <location>
        <begin position="219"/>
        <end position="221"/>
    </location>
</feature>
<feature type="turn" evidence="16">
    <location>
        <begin position="233"/>
        <end position="235"/>
    </location>
</feature>
<feature type="strand" evidence="16">
    <location>
        <begin position="240"/>
        <end position="248"/>
    </location>
</feature>
<feature type="turn" evidence="16">
    <location>
        <begin position="249"/>
        <end position="252"/>
    </location>
</feature>
<feature type="strand" evidence="16">
    <location>
        <begin position="253"/>
        <end position="258"/>
    </location>
</feature>
<feature type="strand" evidence="16">
    <location>
        <begin position="279"/>
        <end position="297"/>
    </location>
</feature>
<feature type="strand" evidence="16">
    <location>
        <begin position="312"/>
        <end position="323"/>
    </location>
</feature>
<feature type="strand" evidence="16">
    <location>
        <begin position="326"/>
        <end position="332"/>
    </location>
</feature>
<feature type="strand" evidence="16">
    <location>
        <begin position="338"/>
        <end position="345"/>
    </location>
</feature>
<feature type="strand" evidence="16">
    <location>
        <begin position="360"/>
        <end position="362"/>
    </location>
</feature>
<feature type="strand" evidence="16">
    <location>
        <begin position="364"/>
        <end position="369"/>
    </location>
</feature>
<feature type="strand" evidence="16">
    <location>
        <begin position="371"/>
        <end position="378"/>
    </location>
</feature>
<feature type="strand" evidence="16">
    <location>
        <begin position="387"/>
        <end position="389"/>
    </location>
</feature>
<feature type="strand" evidence="16">
    <location>
        <begin position="391"/>
        <end position="396"/>
    </location>
</feature>
<feature type="strand" evidence="16">
    <location>
        <begin position="406"/>
        <end position="412"/>
    </location>
</feature>
<feature type="strand" evidence="16">
    <location>
        <begin position="417"/>
        <end position="421"/>
    </location>
</feature>
<feature type="strand" evidence="16">
    <location>
        <begin position="426"/>
        <end position="438"/>
    </location>
</feature>
<feature type="strand" evidence="16">
    <location>
        <begin position="440"/>
        <end position="447"/>
    </location>
</feature>
<feature type="helix" evidence="16">
    <location>
        <begin position="451"/>
        <end position="455"/>
    </location>
</feature>
<feature type="strand" evidence="16">
    <location>
        <begin position="463"/>
        <end position="475"/>
    </location>
</feature>
<feature type="strand" evidence="16">
    <location>
        <begin position="477"/>
        <end position="479"/>
    </location>
</feature>
<feature type="strand" evidence="16">
    <location>
        <begin position="488"/>
        <end position="494"/>
    </location>
</feature>
<feature type="strand" evidence="16">
    <location>
        <begin position="496"/>
        <end position="498"/>
    </location>
</feature>
<feature type="strand" evidence="16">
    <location>
        <begin position="500"/>
        <end position="506"/>
    </location>
</feature>
<feature type="strand" evidence="16">
    <location>
        <begin position="514"/>
        <end position="522"/>
    </location>
</feature>
<feature type="strand" evidence="16">
    <location>
        <begin position="525"/>
        <end position="531"/>
    </location>
</feature>
<feature type="strand" evidence="16">
    <location>
        <begin position="537"/>
        <end position="539"/>
    </location>
</feature>
<feature type="strand" evidence="16">
    <location>
        <begin position="541"/>
        <end position="543"/>
    </location>
</feature>
<feature type="strand" evidence="16">
    <location>
        <begin position="553"/>
        <end position="565"/>
    </location>
</feature>
<feature type="strand" evidence="16">
    <location>
        <begin position="567"/>
        <end position="574"/>
    </location>
</feature>
<feature type="strand" evidence="16">
    <location>
        <begin position="585"/>
        <end position="594"/>
    </location>
</feature>
<sequence>MNNPLVNQAAMVLPVFLLSACLGGGGSFDLDSVETVQDMHSKPKYEDEKSQPESQQDVSENSGAAYGFAVKLPRRNAHFNPKYKEKHKPLGSMDWKKLQRGEPNSFSERDELEKKRGSSELIESKWEDGQSRVVGYTNFTYVRSGYVYLNKNNIDIKNNIVLFGPDGYLYYKGKEPSKELPSEKITYKGTWDYVTDAMEKQRFEGLGSAAGGDKSGALSALEEGVLRNQAEASSGHTDFGMTSEFEVDFSDKTIKGTLYRNNRITQNNSENKQIKTTRYTIQATLHGNRFKGKALAADKGATNGSHPFISDSDSLEGGFYGPKGEELAGKFLSNDNKVAAVFGAKQKDKKDGENAAGPATETVIDAYRITGEEFKKEQIDSFGDVKKLLVDGVELSLLPSEGNKAAFQHEIEQNGVKATVCCSNLDYMSFGKLSKENKDDMFLQGVRTPVSDVAARTEANAKYRGTWYGYIANGTSWSGEASNQEGGNRAEFDVDFSTKKISGTLTAKDRTSPAFTITAMIKDNGFSGVAKTGENGFALDPQNTGNSHYTHIEATVSGGFYGKNAIEMGGSFSFPGNAPEGKQEKASVVFGAKRQQLVQ</sequence>
<evidence type="ECO:0000250" key="1">
    <source>
        <dbReference type="UniProtKB" id="Q09057"/>
    </source>
</evidence>
<evidence type="ECO:0000250" key="2">
    <source>
        <dbReference type="UniProtKB" id="Q9K0V0"/>
    </source>
</evidence>
<evidence type="ECO:0000256" key="3">
    <source>
        <dbReference type="SAM" id="MobiDB-lite"/>
    </source>
</evidence>
<evidence type="ECO:0000269" key="4">
    <source>
    </source>
</evidence>
<evidence type="ECO:0000269" key="5">
    <source>
    </source>
</evidence>
<evidence type="ECO:0000269" key="6">
    <source>
    </source>
</evidence>
<evidence type="ECO:0000269" key="7">
    <source>
    </source>
</evidence>
<evidence type="ECO:0000269" key="8">
    <source>
    </source>
</evidence>
<evidence type="ECO:0000303" key="9">
    <source>
    </source>
</evidence>
<evidence type="ECO:0000303" key="10">
    <source>
    </source>
</evidence>
<evidence type="ECO:0000305" key="11"/>
<evidence type="ECO:0000305" key="12">
    <source>
    </source>
</evidence>
<evidence type="ECO:0000305" key="13">
    <source>
    </source>
</evidence>
<evidence type="ECO:0000305" key="14">
    <source>
    </source>
</evidence>
<evidence type="ECO:0007744" key="15">
    <source>
        <dbReference type="PDB" id="4QQ1"/>
    </source>
</evidence>
<evidence type="ECO:0007829" key="16">
    <source>
        <dbReference type="PDB" id="4QQ1"/>
    </source>
</evidence>
<proteinExistence type="evidence at protein level"/>
<reference key="1">
    <citation type="journal article" date="1993" name="Gene">
        <title>Cloning and characterization of Neisseria meningitidis genes encoding the transferrin-binding proteins Tbp1 and Tbp2.</title>
        <authorList>
            <person name="Legrain M."/>
            <person name="Mazarin V."/>
            <person name="Irwin S.W."/>
            <person name="Bouchon B."/>
            <person name="Quentin-Millet M.-J."/>
            <person name="Jacobs E."/>
            <person name="Schryvers A.B."/>
        </authorList>
    </citation>
    <scope>NUCLEOTIDE SEQUENCE [GENOMIC DNA]</scope>
    <scope>PROTEIN SEQUENCE OF 22-34; 51-61; 158-174; 279-283; 351-368 AND 564-585</scope>
    <scope>TRANSFERRIN-BINDING</scope>
    <scope>SUBCELLULAR LOCATION</scope>
    <source>
        <strain>CCUG 37603 / B16B6 / Serogroup B / Serotype 2a</strain>
    </source>
</reference>
<reference key="2">
    <citation type="journal article" date="1993" name="FEMS Microbiol. Lett.">
        <title>Antigenic relationships of transferrin-binding proteins from Neisseria meningitidis, N. gonorrhoeae and Haemophilus influenzae: cross-reactivity of antibodies to NH2-terminal peptides.</title>
        <authorList>
            <person name="Griffiths E."/>
            <person name="Stevenson P."/>
            <person name="Byfield P."/>
            <person name="Ala'Aldeen D.A.A."/>
            <person name="Borriello S.P."/>
            <person name="Holland J."/>
            <person name="Parsons T."/>
            <person name="Williams P."/>
        </authorList>
    </citation>
    <scope>PROTEIN SEQUENCE OF 21-39</scope>
    <source>
        <strain>CCUG 37603 / B16B6 / Serogroup B / Serotype 2a</strain>
    </source>
</reference>
<reference key="3">
    <citation type="journal article" date="1990" name="Can. J. Microbiol.">
        <title>Receptors for transferrin in pathogenic bacteria are specific for the host's protein.</title>
        <authorList>
            <person name="Schryvers A.B."/>
            <person name="Gonzalez G.C."/>
        </authorList>
    </citation>
    <scope>HOST-SPECIFICITY</scope>
</reference>
<reference key="4">
    <citation type="journal article" date="2016" name="Nat. Microbiol.">
        <title>Slam is an outer membrane protein that is required for the surface display of lipidated virulence factors in Neisseria.</title>
        <authorList>
            <person name="Hooda Y."/>
            <person name="Lai C.C."/>
            <person name="Judd A."/>
            <person name="Buckwalter C.M."/>
            <person name="Shin H.E."/>
            <person name="Gray-Owen S.D."/>
            <person name="Moraes T.F."/>
        </authorList>
    </citation>
    <scope>SUBCELLULAR LOCATION</scope>
    <source>
        <strain>CCUG 37603 / B16B6 / Serogroup B / Serotype 2a</strain>
    </source>
</reference>
<reference evidence="15" key="5">
    <citation type="journal article" date="2015" name="MicrobiologyOpen">
        <title>Patterns of structural and sequence variation within isotype lineages of the Neisseria meningitidis transferrin receptor system.</title>
        <authorList>
            <person name="Adamiak P."/>
            <person name="Calmettes C."/>
            <person name="Moraes T.F."/>
            <person name="Schryvers A.B."/>
        </authorList>
    </citation>
    <scope>X-RAY CRYSTALLOGRAPHY (3.33 ANGSTROMS) OF 58-599</scope>
    <scope>DOMAIN</scope>
    <source>
        <strain>CCUG 37603 / B16B6 / Serogroup B / Serotype 2a</strain>
    </source>
</reference>
<gene>
    <name type="primary">tbpB</name>
    <name evidence="10" type="synonym">tbp2</name>
</gene>
<dbReference type="EMBL" id="Z15129">
    <property type="protein sequence ID" value="CAA78830.1"/>
    <property type="molecule type" value="Genomic_DNA"/>
</dbReference>
<dbReference type="PIR" id="JN0818">
    <property type="entry name" value="JN0818"/>
</dbReference>
<dbReference type="PDB" id="4QQ1">
    <property type="method" value="X-ray"/>
    <property type="resolution" value="3.33 A"/>
    <property type="chains" value="A/B/C=58-599"/>
</dbReference>
<dbReference type="PDBsum" id="4QQ1"/>
<dbReference type="SMR" id="Q06988"/>
<dbReference type="EvolutionaryTrace" id="Q06988"/>
<dbReference type="GO" id="GO:0009279">
    <property type="term" value="C:cell outer membrane"/>
    <property type="evidence" value="ECO:0007669"/>
    <property type="project" value="UniProtKB-SubCell"/>
</dbReference>
<dbReference type="GO" id="GO:0009986">
    <property type="term" value="C:cell surface"/>
    <property type="evidence" value="ECO:0007669"/>
    <property type="project" value="UniProtKB-SubCell"/>
</dbReference>
<dbReference type="Gene3D" id="2.40.128.240">
    <property type="match status" value="1"/>
</dbReference>
<dbReference type="Gene3D" id="2.40.128.250">
    <property type="match status" value="1"/>
</dbReference>
<dbReference type="Gene3D" id="2.40.160.90">
    <property type="match status" value="2"/>
</dbReference>
<dbReference type="InterPro" id="IPR011250">
    <property type="entry name" value="OMP/PagP_b-brl"/>
</dbReference>
<dbReference type="InterPro" id="IPR001677">
    <property type="entry name" value="TbpB_B_D"/>
</dbReference>
<dbReference type="InterPro" id="IPR035316">
    <property type="entry name" value="TbpB_C-lobe"/>
</dbReference>
<dbReference type="InterPro" id="IPR038197">
    <property type="entry name" value="TbpB_C-lobe_sf"/>
</dbReference>
<dbReference type="InterPro" id="IPR035313">
    <property type="entry name" value="TbpB_N-lobe"/>
</dbReference>
<dbReference type="InterPro" id="IPR038669">
    <property type="entry name" value="TbpB_N-lobe_sf"/>
</dbReference>
<dbReference type="Pfam" id="PF17484">
    <property type="entry name" value="TbpB_A"/>
    <property type="match status" value="1"/>
</dbReference>
<dbReference type="Pfam" id="PF01298">
    <property type="entry name" value="TbpB_B_D"/>
    <property type="match status" value="2"/>
</dbReference>
<dbReference type="Pfam" id="PF17483">
    <property type="entry name" value="TbpB_C"/>
    <property type="match status" value="1"/>
</dbReference>
<dbReference type="SUPFAM" id="SSF56925">
    <property type="entry name" value="OMPA-like"/>
    <property type="match status" value="2"/>
</dbReference>
<accession>Q06988</accession>
<organism>
    <name type="scientific">Neisseria meningitidis serogroup B</name>
    <dbReference type="NCBI Taxonomy" id="491"/>
    <lineage>
        <taxon>Bacteria</taxon>
        <taxon>Pseudomonadati</taxon>
        <taxon>Pseudomonadota</taxon>
        <taxon>Betaproteobacteria</taxon>
        <taxon>Neisseriales</taxon>
        <taxon>Neisseriaceae</taxon>
        <taxon>Neisseria</taxon>
    </lineage>
</organism>
<keyword id="KW-0002">3D-structure</keyword>
<keyword id="KW-0998">Cell outer membrane</keyword>
<keyword id="KW-0903">Direct protein sequencing</keyword>
<keyword id="KW-0449">Lipoprotein</keyword>
<keyword id="KW-0472">Membrane</keyword>
<keyword id="KW-0564">Palmitate</keyword>
<keyword id="KW-0675">Receptor</keyword>
<keyword id="KW-0732">Signal</keyword>
<keyword id="KW-0843">Virulence</keyword>
<comment type="function">
    <text evidence="1 12 14">Neisseria acquires iron by extracting it from serum transferrin (TF) in its human host. Acts as a TF receptor and is required for TF utilization. Involved in the initial capture of TF. Helps select only those TF molecules that can be used as an iron source and concentrates them on the cell surface, maintaining the iron-loaded status of the TF C-terminal lobe until its delivery to TbpA.</text>
</comment>
<comment type="subunit">
    <text evidence="2 6">Binds only human holo-transferrin (TF), via the TF C-terminus. Forms a large complex with TF and TbpA (By similarity). Interacts via its C-terminal domain with Slam1 (PubMed:27572441).</text>
</comment>
<comment type="subcellular location">
    <subcellularLocation>
        <location evidence="13 14">Cell outer membrane</location>
        <topology evidence="14">Lipid-anchor</topology>
    </subcellularLocation>
    <subcellularLocation>
        <location evidence="6 8">Cell surface</location>
    </subcellularLocation>
</comment>
<comment type="induction">
    <text>By iron starvation.</text>
</comment>
<comment type="domain">
    <text evidence="5">Has 2 lobes, each of which has an 8-strand beta barrel flanked on their N-terminus by a 4-strand handle domain.</text>
</comment>
<comment type="miscellaneous">
    <text evidence="4">N.meningitidis cells will only bind to human TF, not bovine or porcine TF, explaining at least in part the bacteria's inability to cause infection in non-human hosts.</text>
</comment>
<comment type="similarity">
    <text evidence="12">Belongs to the TbpB family. Isotype I subfamily.</text>
</comment>